<protein>
    <recommendedName>
        <fullName>Putative antitoxin VapB17</fullName>
    </recommendedName>
</protein>
<sequence>MTVKRTTIELDEDLVRAAQAVTGETLRATVERALQQLVAAAAEQAAARRRRIVDHLAHAGTHVDADVLLSEQAWR</sequence>
<organism>
    <name type="scientific">Mycobacterium tuberculosis (strain CDC 1551 / Oshkosh)</name>
    <dbReference type="NCBI Taxonomy" id="83331"/>
    <lineage>
        <taxon>Bacteria</taxon>
        <taxon>Bacillati</taxon>
        <taxon>Actinomycetota</taxon>
        <taxon>Actinomycetes</taxon>
        <taxon>Mycobacteriales</taxon>
        <taxon>Mycobacteriaceae</taxon>
        <taxon>Mycobacterium</taxon>
        <taxon>Mycobacterium tuberculosis complex</taxon>
    </lineage>
</organism>
<proteinExistence type="inferred from homology"/>
<name>VPB17_MYCTO</name>
<gene>
    <name type="primary">vapB17</name>
    <name type="ordered locus">MT2601.2</name>
</gene>
<keyword id="KW-1185">Reference proteome</keyword>
<keyword id="KW-1277">Toxin-antitoxin system</keyword>
<dbReference type="EMBL" id="AE000516">
    <property type="protein sequence ID" value="AAK46911.1"/>
    <property type="molecule type" value="Genomic_DNA"/>
</dbReference>
<dbReference type="PIR" id="B70657">
    <property type="entry name" value="B70657"/>
</dbReference>
<dbReference type="RefSeq" id="WP_003412960.1">
    <property type="nucleotide sequence ID" value="NZ_KK341227.1"/>
</dbReference>
<dbReference type="SMR" id="P9WJ48"/>
<dbReference type="KEGG" id="mtc:MT2601.2"/>
<dbReference type="PATRIC" id="fig|83331.31.peg.2805"/>
<dbReference type="HOGENOM" id="CLU_2917640_0_0_11"/>
<dbReference type="Proteomes" id="UP000001020">
    <property type="component" value="Chromosome"/>
</dbReference>
<dbReference type="InterPro" id="IPR019239">
    <property type="entry name" value="VapB_antitoxin"/>
</dbReference>
<dbReference type="Pfam" id="PF09957">
    <property type="entry name" value="VapB_antitoxin"/>
    <property type="match status" value="1"/>
</dbReference>
<comment type="function">
    <text evidence="1">Putative antitoxin component of a possible type II toxin-antitoxin (TA) system. The cognate toxin is VapC17 (By similarity).</text>
</comment>
<accession>P9WJ48</accession>
<accession>L0T9W3</accession>
<accession>P95027</accession>
<accession>Q7D6Z1</accession>
<reference key="1">
    <citation type="journal article" date="2002" name="J. Bacteriol.">
        <title>Whole-genome comparison of Mycobacterium tuberculosis clinical and laboratory strains.</title>
        <authorList>
            <person name="Fleischmann R.D."/>
            <person name="Alland D."/>
            <person name="Eisen J.A."/>
            <person name="Carpenter L."/>
            <person name="White O."/>
            <person name="Peterson J.D."/>
            <person name="DeBoy R.T."/>
            <person name="Dodson R.J."/>
            <person name="Gwinn M.L."/>
            <person name="Haft D.H."/>
            <person name="Hickey E.K."/>
            <person name="Kolonay J.F."/>
            <person name="Nelson W.C."/>
            <person name="Umayam L.A."/>
            <person name="Ermolaeva M.D."/>
            <person name="Salzberg S.L."/>
            <person name="Delcher A."/>
            <person name="Utterback T.R."/>
            <person name="Weidman J.F."/>
            <person name="Khouri H.M."/>
            <person name="Gill J."/>
            <person name="Mikula A."/>
            <person name="Bishai W."/>
            <person name="Jacobs W.R. Jr."/>
            <person name="Venter J.C."/>
            <person name="Fraser C.M."/>
        </authorList>
    </citation>
    <scope>NUCLEOTIDE SEQUENCE [LARGE SCALE GENOMIC DNA]</scope>
    <source>
        <strain>CDC 1551 / Oshkosh</strain>
    </source>
</reference>
<evidence type="ECO:0000250" key="1"/>
<feature type="chain" id="PRO_0000427892" description="Putative antitoxin VapB17">
    <location>
        <begin position="1"/>
        <end position="75"/>
    </location>
</feature>